<organism>
    <name type="scientific">Haloquadratum walsbyi (strain DSM 16790 / HBSQ001)</name>
    <dbReference type="NCBI Taxonomy" id="362976"/>
    <lineage>
        <taxon>Archaea</taxon>
        <taxon>Methanobacteriati</taxon>
        <taxon>Methanobacteriota</taxon>
        <taxon>Stenosarchaea group</taxon>
        <taxon>Halobacteria</taxon>
        <taxon>Halobacteriales</taxon>
        <taxon>Haloferacaceae</taxon>
        <taxon>Haloquadratum</taxon>
    </lineage>
</organism>
<evidence type="ECO:0000255" key="1">
    <source>
        <dbReference type="HAMAP-Rule" id="MF_00256"/>
    </source>
</evidence>
<evidence type="ECO:0000256" key="2">
    <source>
        <dbReference type="SAM" id="MobiDB-lite"/>
    </source>
</evidence>
<evidence type="ECO:0000305" key="3"/>
<name>RL15E_HALWD</name>
<accession>Q18K99</accession>
<sequence length="196" mass="22393">MARSFYSHIKEAWKQPGDGKLAELQWQRKQEWRDQGAIVRIDRPTRLDKARELGYKAKQGVIIARVAVRKGGARKKRFTSGRRSKRQGVNRLGRRTSIQRIAEERAARKYPNLRTLASYWVGEDGSQKWHEIILIDPEHAAIENDDDLNWICDDTHKGRAFRGLTNAGRSNRGLQNRGKGAEHTRPSAGSGSRRGK</sequence>
<dbReference type="EMBL" id="AM180088">
    <property type="protein sequence ID" value="CAJ51552.1"/>
    <property type="molecule type" value="Genomic_DNA"/>
</dbReference>
<dbReference type="RefSeq" id="WP_011570707.1">
    <property type="nucleotide sequence ID" value="NC_008212.1"/>
</dbReference>
<dbReference type="SMR" id="Q18K99"/>
<dbReference type="STRING" id="362976.HQ_1424A"/>
<dbReference type="GeneID" id="4194606"/>
<dbReference type="KEGG" id="hwa:HQ_1424A"/>
<dbReference type="eggNOG" id="arCOG04209">
    <property type="taxonomic scope" value="Archaea"/>
</dbReference>
<dbReference type="HOGENOM" id="CLU_080796_1_0_2"/>
<dbReference type="Proteomes" id="UP000001975">
    <property type="component" value="Chromosome"/>
</dbReference>
<dbReference type="GO" id="GO:0022625">
    <property type="term" value="C:cytosolic large ribosomal subunit"/>
    <property type="evidence" value="ECO:0007669"/>
    <property type="project" value="TreeGrafter"/>
</dbReference>
<dbReference type="GO" id="GO:0003723">
    <property type="term" value="F:RNA binding"/>
    <property type="evidence" value="ECO:0007669"/>
    <property type="project" value="TreeGrafter"/>
</dbReference>
<dbReference type="GO" id="GO:0003735">
    <property type="term" value="F:structural constituent of ribosome"/>
    <property type="evidence" value="ECO:0007669"/>
    <property type="project" value="InterPro"/>
</dbReference>
<dbReference type="GO" id="GO:0002181">
    <property type="term" value="P:cytoplasmic translation"/>
    <property type="evidence" value="ECO:0007669"/>
    <property type="project" value="TreeGrafter"/>
</dbReference>
<dbReference type="FunFam" id="3.40.1120.10:FF:000002">
    <property type="entry name" value="50S ribosomal protein L15e"/>
    <property type="match status" value="1"/>
</dbReference>
<dbReference type="Gene3D" id="3.40.1120.10">
    <property type="entry name" value="Ribosomal protein l15e"/>
    <property type="match status" value="1"/>
</dbReference>
<dbReference type="HAMAP" id="MF_00256">
    <property type="entry name" value="Ribosomal_eL15"/>
    <property type="match status" value="1"/>
</dbReference>
<dbReference type="InterPro" id="IPR024794">
    <property type="entry name" value="Rbsml_eL15_core_dom_sf"/>
</dbReference>
<dbReference type="InterPro" id="IPR000439">
    <property type="entry name" value="Ribosomal_eL15"/>
</dbReference>
<dbReference type="InterPro" id="IPR020926">
    <property type="entry name" value="Ribosomal_eL15_arc"/>
</dbReference>
<dbReference type="InterPro" id="IPR020925">
    <property type="entry name" value="Ribosomal_eL15_CS"/>
</dbReference>
<dbReference type="InterPro" id="IPR012678">
    <property type="entry name" value="Ribosomal_uL23/eL15/eS24_sf"/>
</dbReference>
<dbReference type="NCBIfam" id="NF003269">
    <property type="entry name" value="PRK04243.1"/>
    <property type="match status" value="1"/>
</dbReference>
<dbReference type="PANTHER" id="PTHR11847:SF4">
    <property type="entry name" value="LARGE RIBOSOMAL SUBUNIT PROTEIN EL15"/>
    <property type="match status" value="1"/>
</dbReference>
<dbReference type="PANTHER" id="PTHR11847">
    <property type="entry name" value="RIBOSOMAL PROTEIN L15"/>
    <property type="match status" value="1"/>
</dbReference>
<dbReference type="Pfam" id="PF00827">
    <property type="entry name" value="Ribosomal_L15e"/>
    <property type="match status" value="1"/>
</dbReference>
<dbReference type="SMART" id="SM01384">
    <property type="entry name" value="Ribosomal_L15e"/>
    <property type="match status" value="1"/>
</dbReference>
<dbReference type="SUPFAM" id="SSF54189">
    <property type="entry name" value="Ribosomal proteins S24e, L23 and L15e"/>
    <property type="match status" value="1"/>
</dbReference>
<dbReference type="PROSITE" id="PS01194">
    <property type="entry name" value="RIBOSOMAL_L15E"/>
    <property type="match status" value="1"/>
</dbReference>
<reference key="1">
    <citation type="journal article" date="2006" name="BMC Genomics">
        <title>The genome of the square archaeon Haloquadratum walsbyi: life at the limits of water activity.</title>
        <authorList>
            <person name="Bolhuis H."/>
            <person name="Palm P."/>
            <person name="Wende A."/>
            <person name="Falb M."/>
            <person name="Rampp M."/>
            <person name="Rodriguez-Valera F."/>
            <person name="Pfeiffer F."/>
            <person name="Oesterhelt D."/>
        </authorList>
    </citation>
    <scope>NUCLEOTIDE SEQUENCE [LARGE SCALE GENOMIC DNA]</scope>
    <source>
        <strain>DSM 16790 / HBSQ001</strain>
    </source>
</reference>
<protein>
    <recommendedName>
        <fullName evidence="1">Large ribosomal subunit protein eL15</fullName>
    </recommendedName>
    <alternativeName>
        <fullName evidence="3">50S ribosomal protein L15e</fullName>
    </alternativeName>
</protein>
<proteinExistence type="inferred from homology"/>
<feature type="chain" id="PRO_0000304203" description="Large ribosomal subunit protein eL15">
    <location>
        <begin position="1"/>
        <end position="196"/>
    </location>
</feature>
<feature type="region of interest" description="Disordered" evidence="2">
    <location>
        <begin position="162"/>
        <end position="196"/>
    </location>
</feature>
<keyword id="KW-1185">Reference proteome</keyword>
<keyword id="KW-0687">Ribonucleoprotein</keyword>
<keyword id="KW-0689">Ribosomal protein</keyword>
<comment type="similarity">
    <text evidence="1">Belongs to the eukaryotic ribosomal protein eL15 family.</text>
</comment>
<gene>
    <name evidence="1" type="primary">rpl15e</name>
    <name type="ordered locus">HQ_1424A</name>
</gene>